<reference evidence="21 24" key="1">
    <citation type="journal article" date="2003" name="Mol. Cell. Biol.">
        <title>Two Drosophila Ada2 homologues function in different multiprotein complexes.</title>
        <authorList>
            <person name="Kusch T."/>
            <person name="Guelman S."/>
            <person name="Abmayr S.M."/>
            <person name="Workman J.L."/>
        </authorList>
    </citation>
    <scope>NUCLEOTIDE SEQUENCE [MRNA] (ISOFORM B)</scope>
    <scope>FUNCTION</scope>
    <scope>ASSOCIATION WITH SAGA-TYPE COMPLEX</scope>
    <scope>INTERACTION WITH SPT3; NIPPED-A; GCN5; ADA3; TAF5; TAF9; TAF10 AND P53</scope>
    <scope>SUBCELLULAR LOCATION</scope>
    <scope>DEVELOPMENTAL STAGE</scope>
</reference>
<reference evidence="25" key="2">
    <citation type="journal article" date="2000" name="Science">
        <title>The genome sequence of Drosophila melanogaster.</title>
        <authorList>
            <person name="Adams M.D."/>
            <person name="Celniker S.E."/>
            <person name="Holt R.A."/>
            <person name="Evans C.A."/>
            <person name="Gocayne J.D."/>
            <person name="Amanatides P.G."/>
            <person name="Scherer S.E."/>
            <person name="Li P.W."/>
            <person name="Hoskins R.A."/>
            <person name="Galle R.F."/>
            <person name="George R.A."/>
            <person name="Lewis S.E."/>
            <person name="Richards S."/>
            <person name="Ashburner M."/>
            <person name="Henderson S.N."/>
            <person name="Sutton G.G."/>
            <person name="Wortman J.R."/>
            <person name="Yandell M.D."/>
            <person name="Zhang Q."/>
            <person name="Chen L.X."/>
            <person name="Brandon R.C."/>
            <person name="Rogers Y.-H.C."/>
            <person name="Blazej R.G."/>
            <person name="Champe M."/>
            <person name="Pfeiffer B.D."/>
            <person name="Wan K.H."/>
            <person name="Doyle C."/>
            <person name="Baxter E.G."/>
            <person name="Helt G."/>
            <person name="Nelson C.R."/>
            <person name="Miklos G.L.G."/>
            <person name="Abril J.F."/>
            <person name="Agbayani A."/>
            <person name="An H.-J."/>
            <person name="Andrews-Pfannkoch C."/>
            <person name="Baldwin D."/>
            <person name="Ballew R.M."/>
            <person name="Basu A."/>
            <person name="Baxendale J."/>
            <person name="Bayraktaroglu L."/>
            <person name="Beasley E.M."/>
            <person name="Beeson K.Y."/>
            <person name="Benos P.V."/>
            <person name="Berman B.P."/>
            <person name="Bhandari D."/>
            <person name="Bolshakov S."/>
            <person name="Borkova D."/>
            <person name="Botchan M.R."/>
            <person name="Bouck J."/>
            <person name="Brokstein P."/>
            <person name="Brottier P."/>
            <person name="Burtis K.C."/>
            <person name="Busam D.A."/>
            <person name="Butler H."/>
            <person name="Cadieu E."/>
            <person name="Center A."/>
            <person name="Chandra I."/>
            <person name="Cherry J.M."/>
            <person name="Cawley S."/>
            <person name="Dahlke C."/>
            <person name="Davenport L.B."/>
            <person name="Davies P."/>
            <person name="de Pablos B."/>
            <person name="Delcher A."/>
            <person name="Deng Z."/>
            <person name="Mays A.D."/>
            <person name="Dew I."/>
            <person name="Dietz S.M."/>
            <person name="Dodson K."/>
            <person name="Doup L.E."/>
            <person name="Downes M."/>
            <person name="Dugan-Rocha S."/>
            <person name="Dunkov B.C."/>
            <person name="Dunn P."/>
            <person name="Durbin K.J."/>
            <person name="Evangelista C.C."/>
            <person name="Ferraz C."/>
            <person name="Ferriera S."/>
            <person name="Fleischmann W."/>
            <person name="Fosler C."/>
            <person name="Gabrielian A.E."/>
            <person name="Garg N.S."/>
            <person name="Gelbart W.M."/>
            <person name="Glasser K."/>
            <person name="Glodek A."/>
            <person name="Gong F."/>
            <person name="Gorrell J.H."/>
            <person name="Gu Z."/>
            <person name="Guan P."/>
            <person name="Harris M."/>
            <person name="Harris N.L."/>
            <person name="Harvey D.A."/>
            <person name="Heiman T.J."/>
            <person name="Hernandez J.R."/>
            <person name="Houck J."/>
            <person name="Hostin D."/>
            <person name="Houston K.A."/>
            <person name="Howland T.J."/>
            <person name="Wei M.-H."/>
            <person name="Ibegwam C."/>
            <person name="Jalali M."/>
            <person name="Kalush F."/>
            <person name="Karpen G.H."/>
            <person name="Ke Z."/>
            <person name="Kennison J.A."/>
            <person name="Ketchum K.A."/>
            <person name="Kimmel B.E."/>
            <person name="Kodira C.D."/>
            <person name="Kraft C.L."/>
            <person name="Kravitz S."/>
            <person name="Kulp D."/>
            <person name="Lai Z."/>
            <person name="Lasko P."/>
            <person name="Lei Y."/>
            <person name="Levitsky A.A."/>
            <person name="Li J.H."/>
            <person name="Li Z."/>
            <person name="Liang Y."/>
            <person name="Lin X."/>
            <person name="Liu X."/>
            <person name="Mattei B."/>
            <person name="McIntosh T.C."/>
            <person name="McLeod M.P."/>
            <person name="McPherson D."/>
            <person name="Merkulov G."/>
            <person name="Milshina N.V."/>
            <person name="Mobarry C."/>
            <person name="Morris J."/>
            <person name="Moshrefi A."/>
            <person name="Mount S.M."/>
            <person name="Moy M."/>
            <person name="Murphy B."/>
            <person name="Murphy L."/>
            <person name="Muzny D.M."/>
            <person name="Nelson D.L."/>
            <person name="Nelson D.R."/>
            <person name="Nelson K.A."/>
            <person name="Nixon K."/>
            <person name="Nusskern D.R."/>
            <person name="Pacleb J.M."/>
            <person name="Palazzolo M."/>
            <person name="Pittman G.S."/>
            <person name="Pan S."/>
            <person name="Pollard J."/>
            <person name="Puri V."/>
            <person name="Reese M.G."/>
            <person name="Reinert K."/>
            <person name="Remington K."/>
            <person name="Saunders R.D.C."/>
            <person name="Scheeler F."/>
            <person name="Shen H."/>
            <person name="Shue B.C."/>
            <person name="Siden-Kiamos I."/>
            <person name="Simpson M."/>
            <person name="Skupski M.P."/>
            <person name="Smith T.J."/>
            <person name="Spier E."/>
            <person name="Spradling A.C."/>
            <person name="Stapleton M."/>
            <person name="Strong R."/>
            <person name="Sun E."/>
            <person name="Svirskas R."/>
            <person name="Tector C."/>
            <person name="Turner R."/>
            <person name="Venter E."/>
            <person name="Wang A.H."/>
            <person name="Wang X."/>
            <person name="Wang Z.-Y."/>
            <person name="Wassarman D.A."/>
            <person name="Weinstock G.M."/>
            <person name="Weissenbach J."/>
            <person name="Williams S.M."/>
            <person name="Woodage T."/>
            <person name="Worley K.C."/>
            <person name="Wu D."/>
            <person name="Yang S."/>
            <person name="Yao Q.A."/>
            <person name="Ye J."/>
            <person name="Yeh R.-F."/>
            <person name="Zaveri J.S."/>
            <person name="Zhan M."/>
            <person name="Zhang G."/>
            <person name="Zhao Q."/>
            <person name="Zheng L."/>
            <person name="Zheng X.H."/>
            <person name="Zhong F.N."/>
            <person name="Zhong W."/>
            <person name="Zhou X."/>
            <person name="Zhu S.C."/>
            <person name="Zhu X."/>
            <person name="Smith H.O."/>
            <person name="Gibbs R.A."/>
            <person name="Myers E.W."/>
            <person name="Rubin G.M."/>
            <person name="Venter J.C."/>
        </authorList>
    </citation>
    <scope>NUCLEOTIDE SEQUENCE [LARGE SCALE GENOMIC DNA]</scope>
    <source>
        <strain evidence="4">Berkeley</strain>
    </source>
</reference>
<reference evidence="21 25" key="3">
    <citation type="journal article" date="2002" name="Genome Biol.">
        <title>Annotation of the Drosophila melanogaster euchromatic genome: a systematic review.</title>
        <authorList>
            <person name="Misra S."/>
            <person name="Crosby M.A."/>
            <person name="Mungall C.J."/>
            <person name="Matthews B.B."/>
            <person name="Campbell K.S."/>
            <person name="Hradecky P."/>
            <person name="Huang Y."/>
            <person name="Kaminker J.S."/>
            <person name="Millburn G.H."/>
            <person name="Prochnik S.E."/>
            <person name="Smith C.D."/>
            <person name="Tupy J.L."/>
            <person name="Whitfield E.J."/>
            <person name="Bayraktaroglu L."/>
            <person name="Berman B.P."/>
            <person name="Bettencourt B.R."/>
            <person name="Celniker S.E."/>
            <person name="de Grey A.D.N.J."/>
            <person name="Drysdale R.A."/>
            <person name="Harris N.L."/>
            <person name="Richter J."/>
            <person name="Russo S."/>
            <person name="Schroeder A.J."/>
            <person name="Shu S.Q."/>
            <person name="Stapleton M."/>
            <person name="Yamada C."/>
            <person name="Ashburner M."/>
            <person name="Gelbart W.M."/>
            <person name="Rubin G.M."/>
            <person name="Lewis S.E."/>
        </authorList>
    </citation>
    <scope>GENOME REANNOTATION</scope>
    <scope>ALTERNATIVE SPLICING</scope>
    <source>
        <strain>Berkeley</strain>
    </source>
</reference>
<reference evidence="21 23" key="4">
    <citation type="journal article" date="2002" name="Genome Biol.">
        <title>A Drosophila full-length cDNA resource.</title>
        <authorList>
            <person name="Stapleton M."/>
            <person name="Carlson J.W."/>
            <person name="Brokstein P."/>
            <person name="Yu C."/>
            <person name="Champe M."/>
            <person name="George R.A."/>
            <person name="Guarin H."/>
            <person name="Kronmiller B."/>
            <person name="Pacleb J.M."/>
            <person name="Park S."/>
            <person name="Wan K.H."/>
            <person name="Rubin G.M."/>
            <person name="Celniker S.E."/>
        </authorList>
    </citation>
    <scope>NUCLEOTIDE SEQUENCE [LARGE SCALE MRNA] (ISOFORM A)</scope>
    <source>
        <strain evidence="23">Berkeley</strain>
        <tissue evidence="6">Embryo</tissue>
    </source>
</reference>
<reference evidence="21" key="5">
    <citation type="journal article" date="2003" name="Mol. Cell. Biol.">
        <title>Two different Drosophila ADA2 homologues are present in distinct GCN5 histone acetyltransferase-containing complexes.</title>
        <authorList>
            <person name="Muratoglu S."/>
            <person name="Georgieva S."/>
            <person name="Papai G."/>
            <person name="Scheer E."/>
            <person name="Enunlu I."/>
            <person name="Komonyi O."/>
            <person name="Cserpan I."/>
            <person name="Lebedeva L."/>
            <person name="Nabirochkina E."/>
            <person name="Udvardy A."/>
            <person name="Tora L."/>
            <person name="Boros I."/>
        </authorList>
    </citation>
    <scope>FUNCTION</scope>
    <scope>INTERACTION WITH GCN5 AND ADA3</scope>
    <scope>SUBCELLULAR LOCATION</scope>
    <scope>DEVELOPMENTAL STAGE</scope>
</reference>
<reference key="6">
    <citation type="journal article" date="2004" name="Mol. Cell. Biol.">
        <title>Drosophila Ada2b is required for viability and normal histone H3 acetylation.</title>
        <authorList>
            <person name="Qi D."/>
            <person name="Larsson J."/>
            <person name="Mannervik M."/>
        </authorList>
    </citation>
    <scope>FUNCTION</scope>
    <scope>INTERACTION WITH GCN5</scope>
    <scope>ALTERNATIVE SPLICING</scope>
    <scope>TISSUE SPECIFICITY</scope>
    <scope>DEVELOPMENTAL STAGE</scope>
    <scope>DISRUPTION PHENOTYPE</scope>
</reference>
<reference key="7">
    <citation type="journal article" date="2005" name="Mol. Cell. Biol.">
        <title>The homologous Drosophila transcriptional adaptors ADA2a and ADA2b are both required for normal development but have different functions.</title>
        <authorList>
            <person name="Pankotai T."/>
            <person name="Komonyi O."/>
            <person name="Bodai L."/>
            <person name="Ujfaludi Z."/>
            <person name="Muratoglu S."/>
            <person name="Ciurciu A."/>
            <person name="Tora L."/>
            <person name="Szabad J."/>
            <person name="Boros I."/>
        </authorList>
    </citation>
    <scope>FUNCTION</scope>
    <scope>DISRUPTION PHENOTYPE</scope>
</reference>
<reference key="8">
    <citation type="journal article" date="2009" name="Nucleic Acids Res.">
        <title>The loss of histone H3 lysine 9 acetylation due to dSAGA-specific dAda2b mutation influences the expression of only a small subset of genes.</title>
        <authorList>
            <person name="Zsindely N."/>
            <person name="Pankotai T."/>
            <person name="Ujfaludi Z."/>
            <person name="Lakatos D."/>
            <person name="Komonyi O."/>
            <person name="Bodai L."/>
            <person name="Tora L."/>
            <person name="Boros I.M."/>
        </authorList>
    </citation>
    <scope>FUNCTION</scope>
</reference>
<reference key="9">
    <citation type="journal article" date="2012" name="FEBS Lett.">
        <title>The C-terminal domains of ADA2 proteins determine selective incorporation into GCN5-containing complexes that target histone H3 or H4 for acetylation.</title>
        <authorList>
            <person name="Vamos E.E."/>
            <person name="Boros I.M."/>
        </authorList>
    </citation>
    <scope>FUNCTION</scope>
</reference>
<reference key="10">
    <citation type="journal article" date="2013" name="BMC Genomics">
        <title>Functional characterization and gene expression profiling of Drosophila melanogaster short dADA2b isoform-containing dSAGA complexes.</title>
        <authorList>
            <person name="Pankotai T."/>
            <person name="Zsindely N."/>
            <person name="Vamos E.E."/>
            <person name="Komonyi O."/>
            <person name="Bodai L."/>
            <person name="Boros I.M."/>
        </authorList>
    </citation>
    <scope>FUNCTION</scope>
    <scope>SUBUNIT</scope>
    <scope>INTERACTION WITH ADA3 AND P53</scope>
    <scope>DEVELOPMENTAL STAGE</scope>
</reference>
<reference key="11">
    <citation type="journal article" date="2019" name="J. Cell Sci.">
        <title>The Drosophila Dbf4 ortholog Chiffon forms a complex with Gcn5 that is necessary for histone acetylation and viability.</title>
        <authorList>
            <person name="Torres-Zelada E.F."/>
            <person name="Stephenson R.E."/>
            <person name="Alpsoy A."/>
            <person name="Anderson B.D."/>
            <person name="Swanson S.K."/>
            <person name="Florens L."/>
            <person name="Dykhuizen E.C."/>
            <person name="Washburn M.P."/>
            <person name="Weake V.M."/>
        </authorList>
    </citation>
    <scope>FUNCTION</scope>
    <scope>IDENTIFICATION IN THE SAGA (ISOFORM B) AND CHAT (ISOFORM A) COMPLEXES</scope>
    <scope>INTERACTION WITH GCN5; ADA3; SPT3; TAF12 AND SPT7</scope>
    <scope>ALTERNATIVE SPLICING</scope>
    <scope>DISRUPTION PHENOTYPE</scope>
    <scope>IDENTIFICATION BY MASS SPECTROMETRY</scope>
</reference>
<reference key="12">
    <citation type="journal article" date="2022" name="J. Cell Sci.">
        <title>Chiffon triggers global histone H3 acetylation and expression of developmental genes in Drosophila embryos.</title>
        <authorList>
            <person name="Torres-Zelada E.F."/>
            <person name="George S."/>
            <person name="Blum H.R."/>
            <person name="Weake V.M."/>
        </authorList>
    </citation>
    <scope>SUBCELLULAR LOCATION</scope>
</reference>
<proteinExistence type="evidence at protein level"/>
<feature type="chain" id="PRO_0000283734" description="Transcriptional adapter 2b">
    <location>
        <begin position="1"/>
        <end position="555"/>
    </location>
</feature>
<feature type="domain" description="SANT" evidence="2">
    <location>
        <begin position="69"/>
        <end position="121"/>
    </location>
</feature>
<feature type="zinc finger region" description="ZZ-type" evidence="1">
    <location>
        <begin position="8"/>
        <end position="63"/>
    </location>
</feature>
<feature type="region of interest" description="Disordered" evidence="3">
    <location>
        <begin position="318"/>
        <end position="372"/>
    </location>
</feature>
<feature type="compositionally biased region" description="Low complexity" evidence="3">
    <location>
        <begin position="339"/>
        <end position="352"/>
    </location>
</feature>
<feature type="compositionally biased region" description="Polar residues" evidence="3">
    <location>
        <begin position="363"/>
        <end position="372"/>
    </location>
</feature>
<feature type="binding site" evidence="1">
    <location>
        <position position="13"/>
    </location>
    <ligand>
        <name>Zn(2+)</name>
        <dbReference type="ChEBI" id="CHEBI:29105"/>
        <label>1</label>
    </ligand>
</feature>
<feature type="binding site" evidence="1">
    <location>
        <position position="16"/>
    </location>
    <ligand>
        <name>Zn(2+)</name>
        <dbReference type="ChEBI" id="CHEBI:29105"/>
        <label>1</label>
    </ligand>
</feature>
<feature type="binding site" evidence="1">
    <location>
        <position position="27"/>
    </location>
    <ligand>
        <name>Zn(2+)</name>
        <dbReference type="ChEBI" id="CHEBI:29105"/>
        <label>2</label>
    </ligand>
</feature>
<feature type="binding site" evidence="1">
    <location>
        <position position="30"/>
    </location>
    <ligand>
        <name>Zn(2+)</name>
        <dbReference type="ChEBI" id="CHEBI:29105"/>
        <label>2</label>
    </ligand>
</feature>
<feature type="binding site" evidence="1">
    <location>
        <position position="36"/>
    </location>
    <ligand>
        <name>Zn(2+)</name>
        <dbReference type="ChEBI" id="CHEBI:29105"/>
        <label>1</label>
    </ligand>
</feature>
<feature type="binding site" evidence="1">
    <location>
        <position position="39"/>
    </location>
    <ligand>
        <name>Zn(2+)</name>
        <dbReference type="ChEBI" id="CHEBI:29105"/>
        <label>1</label>
    </ligand>
</feature>
<feature type="binding site" evidence="1">
    <location>
        <position position="49"/>
    </location>
    <ligand>
        <name>Zn(2+)</name>
        <dbReference type="ChEBI" id="CHEBI:29105"/>
        <label>2</label>
    </ligand>
</feature>
<feature type="binding site" evidence="1">
    <location>
        <position position="53"/>
    </location>
    <ligand>
        <name>Zn(2+)</name>
        <dbReference type="ChEBI" id="CHEBI:29105"/>
        <label>2</label>
    </ligand>
</feature>
<feature type="splice variant" id="VSP_052370" description="In isoform A." evidence="15 16">
    <original>DHTHTSNGSHRPPSSSLHSPQPNLRKVEMSSGGEASSNSIAPRNTLHIADPTCSGALLPSKNYLDSCRGSSAATMLQTTGMVMGVTVD</original>
    <variation>LHCIINAPNNERSNGSIRQCLTTGPHAYLQWKSSAAKLFLALPTTESQKGRNVKRRRGKFKFNRTKKHAPHRRPDLLRRIIAQQKLLG</variation>
    <location>
        <begin position="331"/>
        <end position="418"/>
    </location>
</feature>
<feature type="splice variant" id="VSP_052371" description="In isoform A." evidence="15 16">
    <location>
        <begin position="419"/>
        <end position="555"/>
    </location>
</feature>
<comment type="function">
    <text evidence="5 7 8 9 10 11 12">Component of several Gcn5-containing histone acetyltransferase complexes that regulate nucleosome organization; involved in acetylation of histone H3, particularly on Lys-10 (H3K9ac) and Lys-15 (H3K14ac) (PubMed:12482983, PubMed:12697829, PubMed:15340070, PubMed:19740772, PubMed:22796493). Regulates the transcription of a subset of genes during development; affects recruitment of RNA polymerase II (PubMed:19740772, PubMed:23336284). May be involved in the function of some acidic activation domains, which activate transcription at distant sites (PubMed:12697829). Involved in the p53-dependent apoptosis pathway response to DNA damage by genotoxic agents (PubMed:15340070, PubMed:16135810).</text>
</comment>
<comment type="function">
    <molecule>Isoform B</molecule>
    <text evidence="13">Component of the SAGA histone acetyltransferase complex, which predominantly acetylates histone H3.</text>
</comment>
<comment type="function">
    <molecule>Isoform A</molecule>
    <text evidence="13">Component of the CHAT histone acetyltransferase complex, which predominantly acetylates histone H3.</text>
</comment>
<comment type="subunit">
    <text evidence="7">Component of histone acetyltransferase complexes containing Gcn5 and Ada3.</text>
</comment>
<comment type="subunit">
    <molecule>Isoform B</molecule>
    <text evidence="5 7 12 13 22">Can heterooligomerize with Isoform A (PubMed:23336284). Component of the Spt-Ada-Gcn5 acetyltransferase (SAGA) complex consisting of Ada1, Ada2b (Isoform B), Ada3, wda, Saf6, Spt3, Spt7, Spt20, Taf9, Taf10b, Taf12, Nipped-A/Tra1, Sf3b3, Sf3b5, not/nonstop, Sgf11, Sgf29, e(y)2, Atxn7 and Gcn5 (PubMed:12482983, PubMed:12697829, PubMed:30559249). Taf5 and Taf10, which has partially redundant properties with Taf10b, may also be part of this complex (PubMed:12697829). Interacts (via C-terminus) with Spt3 and Taf12; the interactions are direct (PubMed:30559249). Interacts with Ada3; the interaction is probably direct (Probable) (PubMed:23336284). May also interact directly with Spt7 and Gcn5 (Probable). Interacts with p53 (PubMed:12697829, PubMed:23336284).</text>
</comment>
<comment type="subunit">
    <molecule>Isoform A</molecule>
    <text evidence="8 12 13">Can heterooligomerize with Isoform B (PubMed:23336284). Component of the Chiffon histone acetyltransferase (CHAT) complex consisting of Ada3, Sgf29, Gcn5, chif/chiffon and Ada2b (Isoform A) (PubMed:30559249). Interacts (via N-terminus) with Gcn5 and Ada3; the interaction is direct (PubMed:15340070, PubMed:23336284, PubMed:30559249). Can interact directly with Spt7 in vitro but in vivo this interaction is not stable probably due to the absence of other SAGA components (PubMed:30559249). Interacts with p53 (PubMed:23336284).</text>
</comment>
<comment type="interaction">
    <interactant intactId="EBI-109247">
        <id>Q8I8V0</id>
    </interactant>
    <interactant intactId="EBI-867710">
        <id>O76216</id>
        <label>Gcn5</label>
    </interactant>
    <organismsDiffer>false</organismsDiffer>
    <experiments>7</experiments>
</comment>
<comment type="subcellular location">
    <subcellularLocation>
        <location evidence="2 5 7">Nucleus</location>
    </subcellularLocation>
    <text evidence="7">Almost completely colocalizes with Ada3 to euchromatic interband regions of polytene chromosomes.</text>
</comment>
<comment type="subcellular location">
    <molecule>Isoform B</molecule>
    <subcellularLocation>
        <location evidence="14">Nucleus</location>
    </subcellularLocation>
</comment>
<comment type="subcellular location">
    <molecule>Isoform A</molecule>
    <subcellularLocation>
        <location evidence="14">Nucleus</location>
    </subcellularLocation>
</comment>
<comment type="alternative products">
    <event type="alternative splicing"/>
    <isoform>
        <id>Q8I8V0-1</id>
        <name evidence="7 8 26">B</name>
        <name evidence="20">long</name>
        <name evidence="20">Ada2b-PB</name>
        <name evidence="18">Ada2b(1)</name>
        <name evidence="19">dADA2bL</name>
        <sequence type="displayed"/>
    </isoform>
    <isoform>
        <id>Q8I8V0-2</id>
        <name evidence="4 8 26">A</name>
        <name evidence="26">C</name>
        <name evidence="20">short</name>
        <name evidence="20">Ada2b-PA</name>
        <name evidence="18">Ada2b(2)</name>
        <name evidence="19">dADA2bS</name>
        <sequence type="described" ref="VSP_052370 VSP_052371"/>
    </isoform>
    <text evidence="8 13">A number of isoforms are produced (PubMed:15340070). Isoform A and B have non-redundant functions (PubMed:30559249).</text>
</comment>
<comment type="tissue specificity">
    <text evidence="8">Expressed in nurse cells of stage 10 egg chambers and transcripts are dumped into the oocyte when nurse cells degenerate at late oogenesis.</text>
</comment>
<comment type="developmental stage">
    <text evidence="5 7 8">Expressed both maternally and zygotically throughout development (at protein level); high levels of maternally loaded protein is present at the blastoderm stage (PubMed:12482983, PubMed:12697829, PubMed:15340070). Expression appears to increase in the larval stage (at protein level) (PubMed:12697829). Expression in adult males is reduced compared to females (at protein level) (PubMed:12697829). In advanced stage embryos expression is strongest in the central nervous system with lower expression levels in most other tissues (PubMed:15340070).</text>
</comment>
<comment type="developmental stage">
    <molecule>Isoform B</molecule>
    <text evidence="12">High levels of expression in embryos, dropping around the time of hatching (at protein level) (PubMed:23336284). Expression increases during progression from larva to pupa and into adulthood (at protein level) (PubMed:23336284).</text>
</comment>
<comment type="developmental stage">
    <molecule>Isoform A</molecule>
    <text evidence="12">High levels of expression in embryos, dropping around the time of hatching (at protein level) (PubMed:23336284). Expression increases during progression from larva to pupa but decreases in adults (at protein level) (PubMed:23336284).</text>
</comment>
<comment type="disruption phenotype">
    <text evidence="8 9 13">Lethal during early to late-pupal/pharate-adult stage, without any gross morphological abnormalities.</text>
</comment>
<dbReference type="EMBL" id="AY142213">
    <property type="protein sequence ID" value="AAN52141.1"/>
    <property type="molecule type" value="mRNA"/>
</dbReference>
<dbReference type="EMBL" id="AE014297">
    <property type="protein sequence ID" value="AAF54199.1"/>
    <property type="molecule type" value="Genomic_DNA"/>
</dbReference>
<dbReference type="EMBL" id="AE014297">
    <property type="protein sequence ID" value="AAZ52519.1"/>
    <property type="molecule type" value="Genomic_DNA"/>
</dbReference>
<dbReference type="EMBL" id="AE014297">
    <property type="protein sequence ID" value="AGB95749.1"/>
    <property type="molecule type" value="Genomic_DNA"/>
</dbReference>
<dbReference type="EMBL" id="AY058546">
    <property type="protein sequence ID" value="AAL13775.1"/>
    <property type="molecule type" value="mRNA"/>
</dbReference>
<dbReference type="RefSeq" id="NP_001027151.1">
    <molecule id="Q8I8V0-1"/>
    <property type="nucleotide sequence ID" value="NM_001031980.2"/>
</dbReference>
<dbReference type="RefSeq" id="NP_001262367.1">
    <molecule id="Q8I8V0-2"/>
    <property type="nucleotide sequence ID" value="NM_001275438.1"/>
</dbReference>
<dbReference type="RefSeq" id="NP_649773.1">
    <molecule id="Q8I8V0-2"/>
    <property type="nucleotide sequence ID" value="NM_141516.3"/>
</dbReference>
<dbReference type="SMR" id="Q8I8V0"/>
<dbReference type="BioGRID" id="66149">
    <property type="interactions" value="118"/>
</dbReference>
<dbReference type="ComplexPortal" id="CPX-2644">
    <property type="entry name" value="SAGA complex"/>
</dbReference>
<dbReference type="ComplexPortal" id="CPX-2774">
    <molecule id="Q8I8V0-2"/>
    <property type="entry name" value="CHAT histone acetyltransferase complex"/>
</dbReference>
<dbReference type="ComplexPortal" id="CPX-2824">
    <molecule id="Q8I8V0-1"/>
    <property type="entry name" value="ADA complex"/>
</dbReference>
<dbReference type="FunCoup" id="Q8I8V0">
    <property type="interactions" value="1249"/>
</dbReference>
<dbReference type="IntAct" id="Q8I8V0">
    <property type="interactions" value="19"/>
</dbReference>
<dbReference type="MINT" id="Q8I8V0"/>
<dbReference type="STRING" id="7227.FBpp0099776"/>
<dbReference type="PaxDb" id="7227-FBpp0099776"/>
<dbReference type="EnsemblMetazoa" id="FBtr0081807">
    <molecule id="Q8I8V0-2"/>
    <property type="protein sequence ID" value="FBpp0081303"/>
    <property type="gene ID" value="FBgn0037555"/>
</dbReference>
<dbReference type="EnsemblMetazoa" id="FBtr0100368">
    <molecule id="Q8I8V0-1"/>
    <property type="protein sequence ID" value="FBpp0099776"/>
    <property type="gene ID" value="FBgn0037555"/>
</dbReference>
<dbReference type="EnsemblMetazoa" id="FBtr0334315">
    <molecule id="Q8I8V0-2"/>
    <property type="protein sequence ID" value="FBpp0306430"/>
    <property type="gene ID" value="FBgn0037555"/>
</dbReference>
<dbReference type="GeneID" id="40966"/>
<dbReference type="KEGG" id="dme:Dmel_CG9638"/>
<dbReference type="AGR" id="FB:FBgn0037555"/>
<dbReference type="CTD" id="559295"/>
<dbReference type="FlyBase" id="FBgn0037555">
    <property type="gene designation" value="Ada2b"/>
</dbReference>
<dbReference type="VEuPathDB" id="VectorBase:FBgn0037555"/>
<dbReference type="eggNOG" id="KOG0457">
    <property type="taxonomic scope" value="Eukaryota"/>
</dbReference>
<dbReference type="GeneTree" id="ENSGT00940000157318"/>
<dbReference type="HOGENOM" id="CLU_018273_4_1_1"/>
<dbReference type="InParanoid" id="Q8I8V0"/>
<dbReference type="OMA" id="HIADPTC"/>
<dbReference type="OrthoDB" id="270417at2759"/>
<dbReference type="PhylomeDB" id="Q8I8V0"/>
<dbReference type="Reactome" id="R-DME-5689880">
    <property type="pathway name" value="Ub-specific processing proteases"/>
</dbReference>
<dbReference type="SignaLink" id="Q8I8V0"/>
<dbReference type="BioGRID-ORCS" id="40966">
    <property type="hits" value="1 hit in 1 CRISPR screen"/>
</dbReference>
<dbReference type="GenomeRNAi" id="40966"/>
<dbReference type="PRO" id="PR:Q8I8V0"/>
<dbReference type="Proteomes" id="UP000000803">
    <property type="component" value="Chromosome 3R"/>
</dbReference>
<dbReference type="Bgee" id="FBgn0037555">
    <property type="expression patterns" value="Expressed in cleaving embryo and 116 other cell types or tissues"/>
</dbReference>
<dbReference type="ExpressionAtlas" id="Q8I8V0">
    <property type="expression patterns" value="baseline and differential"/>
</dbReference>
<dbReference type="GO" id="GO:0005634">
    <property type="term" value="C:nucleus"/>
    <property type="evidence" value="ECO:0000314"/>
    <property type="project" value="UniProtKB"/>
</dbReference>
<dbReference type="GO" id="GO:0005700">
    <property type="term" value="C:polytene chromosome"/>
    <property type="evidence" value="ECO:0000314"/>
    <property type="project" value="FlyBase"/>
</dbReference>
<dbReference type="GO" id="GO:0000124">
    <property type="term" value="C:SAGA complex"/>
    <property type="evidence" value="ECO:0000314"/>
    <property type="project" value="FlyBase"/>
</dbReference>
<dbReference type="GO" id="GO:0070461">
    <property type="term" value="C:SAGA-type complex"/>
    <property type="evidence" value="ECO:0000318"/>
    <property type="project" value="GO_Central"/>
</dbReference>
<dbReference type="GO" id="GO:0003682">
    <property type="term" value="F:chromatin binding"/>
    <property type="evidence" value="ECO:0000318"/>
    <property type="project" value="GO_Central"/>
</dbReference>
<dbReference type="GO" id="GO:0003677">
    <property type="term" value="F:DNA binding"/>
    <property type="evidence" value="ECO:0007669"/>
    <property type="project" value="UniProtKB-KW"/>
</dbReference>
<dbReference type="GO" id="GO:0003713">
    <property type="term" value="F:transcription coactivator activity"/>
    <property type="evidence" value="ECO:0000318"/>
    <property type="project" value="GO_Central"/>
</dbReference>
<dbReference type="GO" id="GO:0008270">
    <property type="term" value="F:zinc ion binding"/>
    <property type="evidence" value="ECO:0007669"/>
    <property type="project" value="UniProtKB-KW"/>
</dbReference>
<dbReference type="GO" id="GO:0006338">
    <property type="term" value="P:chromatin remodeling"/>
    <property type="evidence" value="ECO:0000314"/>
    <property type="project" value="UniProtKB"/>
</dbReference>
<dbReference type="GO" id="GO:0006355">
    <property type="term" value="P:regulation of DNA-templated transcription"/>
    <property type="evidence" value="ECO:0000314"/>
    <property type="project" value="UniProtKB"/>
</dbReference>
<dbReference type="GO" id="GO:0006357">
    <property type="term" value="P:regulation of transcription by RNA polymerase II"/>
    <property type="evidence" value="ECO:0000318"/>
    <property type="project" value="GO_Central"/>
</dbReference>
<dbReference type="GO" id="GO:0035222">
    <property type="term" value="P:wing disc pattern formation"/>
    <property type="evidence" value="ECO:0000316"/>
    <property type="project" value="FlyBase"/>
</dbReference>
<dbReference type="CDD" id="cd00167">
    <property type="entry name" value="SANT"/>
    <property type="match status" value="1"/>
</dbReference>
<dbReference type="CDD" id="cd02335">
    <property type="entry name" value="ZZ_ADA2"/>
    <property type="match status" value="1"/>
</dbReference>
<dbReference type="FunFam" id="3.30.60.90:FF:000008">
    <property type="entry name" value="Transcriptional adapter 2"/>
    <property type="match status" value="1"/>
</dbReference>
<dbReference type="Gene3D" id="3.30.60.90">
    <property type="match status" value="1"/>
</dbReference>
<dbReference type="Gene3D" id="1.10.10.60">
    <property type="entry name" value="Homeodomain-like"/>
    <property type="match status" value="1"/>
</dbReference>
<dbReference type="Gene3D" id="1.10.10.10">
    <property type="entry name" value="Winged helix-like DNA-binding domain superfamily/Winged helix DNA-binding domain"/>
    <property type="match status" value="1"/>
</dbReference>
<dbReference type="InterPro" id="IPR041983">
    <property type="entry name" value="ADA2-like_ZZ"/>
</dbReference>
<dbReference type="InterPro" id="IPR016827">
    <property type="entry name" value="Ada2/TADA2"/>
</dbReference>
<dbReference type="InterPro" id="IPR056267">
    <property type="entry name" value="Ada2b_C"/>
</dbReference>
<dbReference type="InterPro" id="IPR009057">
    <property type="entry name" value="Homeodomain-like_sf"/>
</dbReference>
<dbReference type="InterPro" id="IPR017930">
    <property type="entry name" value="Myb_dom"/>
</dbReference>
<dbReference type="InterPro" id="IPR001005">
    <property type="entry name" value="SANT/Myb"/>
</dbReference>
<dbReference type="InterPro" id="IPR017884">
    <property type="entry name" value="SANT_dom"/>
</dbReference>
<dbReference type="InterPro" id="IPR055141">
    <property type="entry name" value="TADA2A_B-like_dom"/>
</dbReference>
<dbReference type="InterPro" id="IPR036388">
    <property type="entry name" value="WH-like_DNA-bd_sf"/>
</dbReference>
<dbReference type="InterPro" id="IPR000433">
    <property type="entry name" value="Znf_ZZ"/>
</dbReference>
<dbReference type="InterPro" id="IPR043145">
    <property type="entry name" value="Znf_ZZ_sf"/>
</dbReference>
<dbReference type="PANTHER" id="PTHR12374:SF63">
    <property type="entry name" value="TRANSCRIPTIONAL ADAPTER 2-BETA"/>
    <property type="match status" value="1"/>
</dbReference>
<dbReference type="PANTHER" id="PTHR12374">
    <property type="entry name" value="TRANSCRIPTIONAL ADAPTOR 2 ADA2 -RELATED"/>
    <property type="match status" value="1"/>
</dbReference>
<dbReference type="Pfam" id="PF00249">
    <property type="entry name" value="Myb_DNA-binding"/>
    <property type="match status" value="1"/>
</dbReference>
<dbReference type="Pfam" id="PF22941">
    <property type="entry name" value="TADA2A-like_3rd"/>
    <property type="match status" value="1"/>
</dbReference>
<dbReference type="Pfam" id="PF24533">
    <property type="entry name" value="Tri-helical_Ada2b_C"/>
    <property type="match status" value="1"/>
</dbReference>
<dbReference type="Pfam" id="PF25299">
    <property type="entry name" value="ZZ_ADA2"/>
    <property type="match status" value="1"/>
</dbReference>
<dbReference type="PIRSF" id="PIRSF025024">
    <property type="entry name" value="Transcriptional_adaptor_2"/>
    <property type="match status" value="1"/>
</dbReference>
<dbReference type="SMART" id="SM00717">
    <property type="entry name" value="SANT"/>
    <property type="match status" value="1"/>
</dbReference>
<dbReference type="SMART" id="SM00291">
    <property type="entry name" value="ZnF_ZZ"/>
    <property type="match status" value="1"/>
</dbReference>
<dbReference type="SUPFAM" id="SSF46689">
    <property type="entry name" value="Homeodomain-like"/>
    <property type="match status" value="2"/>
</dbReference>
<dbReference type="SUPFAM" id="SSF57850">
    <property type="entry name" value="RING/U-box"/>
    <property type="match status" value="1"/>
</dbReference>
<dbReference type="PROSITE" id="PS51293">
    <property type="entry name" value="SANT"/>
    <property type="match status" value="1"/>
</dbReference>
<dbReference type="PROSITE" id="PS01357">
    <property type="entry name" value="ZF_ZZ_1"/>
    <property type="match status" value="1"/>
</dbReference>
<dbReference type="PROSITE" id="PS50135">
    <property type="entry name" value="ZF_ZZ_2"/>
    <property type="match status" value="1"/>
</dbReference>
<name>TAD2B_DROME</name>
<evidence type="ECO:0000255" key="1">
    <source>
        <dbReference type="PROSITE-ProRule" id="PRU00228"/>
    </source>
</evidence>
<evidence type="ECO:0000255" key="2">
    <source>
        <dbReference type="PROSITE-ProRule" id="PRU00624"/>
    </source>
</evidence>
<evidence type="ECO:0000256" key="3">
    <source>
        <dbReference type="SAM" id="MobiDB-lite"/>
    </source>
</evidence>
<evidence type="ECO:0000269" key="4">
    <source>
    </source>
</evidence>
<evidence type="ECO:0000269" key="5">
    <source>
    </source>
</evidence>
<evidence type="ECO:0000269" key="6">
    <source>
    </source>
</evidence>
<evidence type="ECO:0000269" key="7">
    <source>
    </source>
</evidence>
<evidence type="ECO:0000269" key="8">
    <source>
    </source>
</evidence>
<evidence type="ECO:0000269" key="9">
    <source>
    </source>
</evidence>
<evidence type="ECO:0000269" key="10">
    <source>
    </source>
</evidence>
<evidence type="ECO:0000269" key="11">
    <source>
    </source>
</evidence>
<evidence type="ECO:0000269" key="12">
    <source>
    </source>
</evidence>
<evidence type="ECO:0000269" key="13">
    <source>
    </source>
</evidence>
<evidence type="ECO:0000269" key="14">
    <source>
    </source>
</evidence>
<evidence type="ECO:0000303" key="15">
    <source>
    </source>
</evidence>
<evidence type="ECO:0000303" key="16">
    <source>
    </source>
</evidence>
<evidence type="ECO:0000303" key="17">
    <source>
    </source>
</evidence>
<evidence type="ECO:0000303" key="18">
    <source>
    </source>
</evidence>
<evidence type="ECO:0000303" key="19">
    <source>
    </source>
</evidence>
<evidence type="ECO:0000303" key="20">
    <source>
    </source>
</evidence>
<evidence type="ECO:0000305" key="21"/>
<evidence type="ECO:0000305" key="22">
    <source>
    </source>
</evidence>
<evidence type="ECO:0000312" key="23">
    <source>
        <dbReference type="EMBL" id="AAL13775.1"/>
    </source>
</evidence>
<evidence type="ECO:0000312" key="24">
    <source>
        <dbReference type="EMBL" id="AAN52141.1"/>
    </source>
</evidence>
<evidence type="ECO:0000312" key="25">
    <source>
        <dbReference type="EMBL" id="AAZ52519.1"/>
    </source>
</evidence>
<evidence type="ECO:0000312" key="26">
    <source>
        <dbReference type="FlyBase" id="FBgn0037555"/>
    </source>
</evidence>
<gene>
    <name evidence="26" type="primary">Ada2b</name>
    <name evidence="17" type="synonym">Ada2S</name>
    <name evidence="26" type="ORF">CG9638</name>
</gene>
<organism>
    <name type="scientific">Drosophila melanogaster</name>
    <name type="common">Fruit fly</name>
    <dbReference type="NCBI Taxonomy" id="7227"/>
    <lineage>
        <taxon>Eukaryota</taxon>
        <taxon>Metazoa</taxon>
        <taxon>Ecdysozoa</taxon>
        <taxon>Arthropoda</taxon>
        <taxon>Hexapoda</taxon>
        <taxon>Insecta</taxon>
        <taxon>Pterygota</taxon>
        <taxon>Neoptera</taxon>
        <taxon>Endopterygota</taxon>
        <taxon>Diptera</taxon>
        <taxon>Brachycera</taxon>
        <taxon>Muscomorpha</taxon>
        <taxon>Ephydroidea</taxon>
        <taxon>Drosophilidae</taxon>
        <taxon>Drosophila</taxon>
        <taxon>Sophophora</taxon>
    </lineage>
</organism>
<sequence>MTTIADLFTKYNCTNCQDDIQGIRVHCAECENFDLCLQCFAAGAEIGAHQNNHSYQFMDTGTSILSVFRGKGAWTAREEIRLLDAIEQYGFGNWEDISKHIETKSAEDAKEEYVNKFVNGTIGRATWTPAQSQRPRLIDHTGDDDAGPLGTNALSTLPPLEINSDEAMQLGYMPNRDSFEREYDPTAEQLISNISLSSEDTEVDVMLKLAHVDIYTRRLRERARRKRMVRDYQLVSNFFRNRNYAQQQGLTKEQREFRDRFRVYAQFYTCNEYERLLGSLEREKELRIRQSELYRYRYNGLTKIAECTHFEQHAATATHRSTGPYGHGKTDHTHTSNGSHRPPSSSLHSPQPNLRKVEMSSGGEASSNSIAPRNTLHIADPTCSGALLPSKNYLDSCRGSSAATMLQTTGMVMGVTVDSGATTGVTSTATTMANLPTNSAKGSQQHLQPLQQHPQLLQSGNQHKMQNEAAGGGSDQVPSMSLKLRTQLEELKHLPQPPGSELLSHNELDLCKKHNITPTTYLSVKTVCLSGAPSLGSPMETSLRKFFIKCGWLSH</sequence>
<keyword id="KW-0025">Alternative splicing</keyword>
<keyword id="KW-0238">DNA-binding</keyword>
<keyword id="KW-0479">Metal-binding</keyword>
<keyword id="KW-0539">Nucleus</keyword>
<keyword id="KW-1185">Reference proteome</keyword>
<keyword id="KW-0804">Transcription</keyword>
<keyword id="KW-0805">Transcription regulation</keyword>
<keyword id="KW-0862">Zinc</keyword>
<keyword id="KW-0863">Zinc-finger</keyword>
<protein>
    <recommendedName>
        <fullName evidence="26">Transcriptional adapter 2b</fullName>
    </recommendedName>
    <alternativeName>
        <fullName evidence="17">dADA2b</fullName>
    </alternativeName>
</protein>
<accession>Q8I8V0</accession>
<accession>A0A0B4KFU2</accession>
<accession>Q9VHV0</accession>